<proteinExistence type="inferred from homology"/>
<gene>
    <name evidence="3" type="primary">fusA</name>
    <name type="ordered locus">MK0679</name>
</gene>
<feature type="chain" id="PRO_0000007436" description="Elongation factor 2, 1st part" evidence="2">
    <location>
        <begin position="1"/>
        <end position="34"/>
    </location>
</feature>
<feature type="chain" id="PRO_0000007437" description="Mka FusA intein" evidence="2">
    <location>
        <begin position="35"/>
        <end position="556"/>
    </location>
</feature>
<feature type="chain" id="PRO_0000007438" description="Elongation factor 2, 2nd part" evidence="2">
    <location>
        <begin position="557"/>
        <end position="1257"/>
    </location>
</feature>
<feature type="domain" description="DOD-type homing endonuclease">
    <location>
        <begin position="273"/>
        <end position="402"/>
    </location>
</feature>
<feature type="domain" description="tr-type G">
    <location>
        <begin position="541"/>
        <end position="782"/>
    </location>
</feature>
<feature type="region of interest" description="Disordered" evidence="4">
    <location>
        <begin position="1237"/>
        <end position="1257"/>
    </location>
</feature>
<feature type="compositionally biased region" description="Basic and acidic residues" evidence="4">
    <location>
        <begin position="1237"/>
        <end position="1250"/>
    </location>
</feature>
<feature type="binding site" evidence="3">
    <location>
        <begin position="616"/>
        <end position="620"/>
    </location>
    <ligand>
        <name>GTP</name>
        <dbReference type="ChEBI" id="CHEBI:37565"/>
    </ligand>
</feature>
<feature type="binding site" evidence="3">
    <location>
        <begin position="670"/>
        <end position="673"/>
    </location>
    <ligand>
        <name>GTP</name>
        <dbReference type="ChEBI" id="CHEBI:37565"/>
    </ligand>
</feature>
<feature type="modified residue" description="Diphthamide" evidence="3">
    <location>
        <position position="1120"/>
    </location>
</feature>
<sequence length="1257" mass="142071">MGRKEKMAEKCRKLMTEPGKIRNIGIIAHIDHGKCVAPETKICLADGRFVRADELFEELKERGRLVKCDESEEVYELREPVGVSSLDKDAVEIVEGKITHVWRLKADKLVEVEVKNGRSIRTTPEHKFLVLDPSGEIVEKRADELEIGDYIVCTQKLVHEGMSEEELKREVFRRLGRDFFVHLPEEEAESVLELAKERGIKALWETLEVDIEENSFYYQLRKGRIRADILVDLAEELGLDLADLYDAVEVSYRSNTKSTKPIRLPEPEDLFYLAGLMFGDGCWNQLTNGSEAIQGEVKRIASDMGLEVRVRRYEGKTARIDFPETVPRILEALFDYPRRKKAHRIRVNDFLTRAPLDCIAEFIRGYFDADGTVEEGRSAVSVTSVSREFLEDLQLLLQKFDVASYLREGDGAYTLYVSGARSLERFPGFREPEKAEKLKKLMEKASSSELEKVPISGEILREVRGDVPTTRMFNCYSNYEGGQVGLTKSSLEKVISTLEAVGVEGEALERLKALARDDVCFLEVVRVEEVEYDGYVYDFTVEEHHNFAAEGFVVHNTTLSDQLLAGAGMISEELAGDQLVLDFDEMEQERGITIDAANVSMVHEYEGEEYLINLIDTPGHVDFSGDVTRAMRAVDGAIVVVCAVEGVMPQTETVLRQALRERVRPVLYINKVDRLINELKLSPEEMQNRFLEIISEVNKMIEQMAPEEFKDEWKVSVEDGSVAFGSAYYGWGISFPFMEKTGITFKDIIEYCQQDKQKELAQEAPVYQVVLDMVVKHLPDPVTAQEYRIEQIWPGDPESEDGKTLRKCDPNGKLAMVVTDVRIDEHAGEVATGRVYSGTIREGQQVYLASSKKETRVQQVGIYMGPDRIRTDEVPAGNIAAVTGLRDVWAGETVTDPEDPIEPFEELQHFAEPVVTVAVEAKNTQDLPKLIEILHQIAKEDPTVKVEINEETGQHLVSGMGELHLEIIAHRIKERGVDIKVSEPIVVYREGVFGVCDDEVEGKSPNKHNKFYVTVEPVEEEIVEAIEEGKFNPEEMSKKELEETLMEYGMDRDDAKAVETVKGTNFFLDKTVGLQYLNEVMELLIEGFEEAMEEGPLAKEPCRGVKVSLVDAEIHEDPVHRGPAQVIPAIKRAIYGGMLLADTHLLEPMQYIYVTVPQDYMGAVTKEIQGRRGTIEEIQQEGDTVIIKGKAPVAEMFGFANDIRSATEGRAIWTTEHAGYERVPEELEEQIIREIRERKGLKPEPPKPEDYIEDYGG</sequence>
<accession>Q8TXJ4</accession>
<keyword id="KW-0068">Autocatalytic cleavage</keyword>
<keyword id="KW-0963">Cytoplasm</keyword>
<keyword id="KW-0251">Elongation factor</keyword>
<keyword id="KW-0255">Endonuclease</keyword>
<keyword id="KW-0342">GTP-binding</keyword>
<keyword id="KW-0378">Hydrolase</keyword>
<keyword id="KW-0404">Intron homing</keyword>
<keyword id="KW-0540">Nuclease</keyword>
<keyword id="KW-0547">Nucleotide-binding</keyword>
<keyword id="KW-0648">Protein biosynthesis</keyword>
<keyword id="KW-0651">Protein splicing</keyword>
<keyword id="KW-1185">Reference proteome</keyword>
<protein>
    <recommendedName>
        <fullName evidence="3">Elongation factor 2</fullName>
        <shortName evidence="3">EF-2</shortName>
    </recommendedName>
    <component>
        <recommendedName>
            <fullName>Mka FusA intein</fullName>
        </recommendedName>
    </component>
</protein>
<evidence type="ECO:0000250" key="1"/>
<evidence type="ECO:0000255" key="2"/>
<evidence type="ECO:0000255" key="3">
    <source>
        <dbReference type="HAMAP-Rule" id="MF_00054"/>
    </source>
</evidence>
<evidence type="ECO:0000256" key="4">
    <source>
        <dbReference type="SAM" id="MobiDB-lite"/>
    </source>
</evidence>
<dbReference type="EMBL" id="AE009439">
    <property type="protein sequence ID" value="AAM01894.1"/>
    <property type="molecule type" value="Genomic_DNA"/>
</dbReference>
<dbReference type="SMR" id="Q8TXJ4"/>
<dbReference type="FunCoup" id="Q8TXJ4">
    <property type="interactions" value="188"/>
</dbReference>
<dbReference type="STRING" id="190192.MK0679"/>
<dbReference type="PaxDb" id="190192-MK0679"/>
<dbReference type="EnsemblBacteria" id="AAM01894">
    <property type="protein sequence ID" value="AAM01894"/>
    <property type="gene ID" value="MK0679"/>
</dbReference>
<dbReference type="KEGG" id="mka:MK0679"/>
<dbReference type="PATRIC" id="fig|190192.8.peg.718"/>
<dbReference type="HOGENOM" id="CLU_265167_0_0_2"/>
<dbReference type="InParanoid" id="Q8TXJ4"/>
<dbReference type="Proteomes" id="UP000001826">
    <property type="component" value="Chromosome"/>
</dbReference>
<dbReference type="GO" id="GO:0005829">
    <property type="term" value="C:cytosol"/>
    <property type="evidence" value="ECO:0007669"/>
    <property type="project" value="TreeGrafter"/>
</dbReference>
<dbReference type="GO" id="GO:1990904">
    <property type="term" value="C:ribonucleoprotein complex"/>
    <property type="evidence" value="ECO:0007669"/>
    <property type="project" value="TreeGrafter"/>
</dbReference>
<dbReference type="GO" id="GO:0004519">
    <property type="term" value="F:endonuclease activity"/>
    <property type="evidence" value="ECO:0007669"/>
    <property type="project" value="UniProtKB-KW"/>
</dbReference>
<dbReference type="GO" id="GO:0005525">
    <property type="term" value="F:GTP binding"/>
    <property type="evidence" value="ECO:0007669"/>
    <property type="project" value="UniProtKB-UniRule"/>
</dbReference>
<dbReference type="GO" id="GO:0003924">
    <property type="term" value="F:GTPase activity"/>
    <property type="evidence" value="ECO:0007669"/>
    <property type="project" value="InterPro"/>
</dbReference>
<dbReference type="GO" id="GO:0003746">
    <property type="term" value="F:translation elongation factor activity"/>
    <property type="evidence" value="ECO:0007669"/>
    <property type="project" value="UniProtKB-UniRule"/>
</dbReference>
<dbReference type="GO" id="GO:0016539">
    <property type="term" value="P:intein-mediated protein splicing"/>
    <property type="evidence" value="ECO:0007669"/>
    <property type="project" value="InterPro"/>
</dbReference>
<dbReference type="GO" id="GO:0006314">
    <property type="term" value="P:intron homing"/>
    <property type="evidence" value="ECO:0007669"/>
    <property type="project" value="UniProtKB-KW"/>
</dbReference>
<dbReference type="CDD" id="cd01681">
    <property type="entry name" value="aeEF2_snRNP_like_IV"/>
    <property type="match status" value="1"/>
</dbReference>
<dbReference type="CDD" id="cd01885">
    <property type="entry name" value="EF2"/>
    <property type="match status" value="1"/>
</dbReference>
<dbReference type="CDD" id="cd16268">
    <property type="entry name" value="EF2_II"/>
    <property type="match status" value="1"/>
</dbReference>
<dbReference type="CDD" id="cd16261">
    <property type="entry name" value="EF2_snRNP_III"/>
    <property type="match status" value="1"/>
</dbReference>
<dbReference type="CDD" id="cd01514">
    <property type="entry name" value="Elongation_Factor_C"/>
    <property type="match status" value="1"/>
</dbReference>
<dbReference type="CDD" id="cd00081">
    <property type="entry name" value="Hint"/>
    <property type="match status" value="2"/>
</dbReference>
<dbReference type="FunFam" id="3.30.230.10:FF:000009">
    <property type="entry name" value="116 kDa U5 small nuclear ribonucleoprotein component"/>
    <property type="match status" value="1"/>
</dbReference>
<dbReference type="FunFam" id="3.30.70.240:FF:000010">
    <property type="entry name" value="Elongation factor 2"/>
    <property type="match status" value="1"/>
</dbReference>
<dbReference type="FunFam" id="3.30.70.870:FF:000002">
    <property type="entry name" value="Translation elongation factor 2"/>
    <property type="match status" value="1"/>
</dbReference>
<dbReference type="Gene3D" id="3.30.230.10">
    <property type="match status" value="1"/>
</dbReference>
<dbReference type="Gene3D" id="3.30.70.240">
    <property type="match status" value="1"/>
</dbReference>
<dbReference type="Gene3D" id="3.30.70.870">
    <property type="entry name" value="Elongation Factor G (Translational Gtpase), domain 3"/>
    <property type="match status" value="1"/>
</dbReference>
<dbReference type="Gene3D" id="2.170.16.10">
    <property type="entry name" value="Hedgehog/Intein (Hint) domain"/>
    <property type="match status" value="2"/>
</dbReference>
<dbReference type="Gene3D" id="3.10.28.10">
    <property type="entry name" value="Homing endonucleases"/>
    <property type="match status" value="1"/>
</dbReference>
<dbReference type="Gene3D" id="3.40.50.300">
    <property type="entry name" value="P-loop containing nucleotide triphosphate hydrolases"/>
    <property type="match status" value="1"/>
</dbReference>
<dbReference type="Gene3D" id="2.40.30.10">
    <property type="entry name" value="Translation factors"/>
    <property type="match status" value="1"/>
</dbReference>
<dbReference type="HAMAP" id="MF_00054_A">
    <property type="entry name" value="EF_G_EF_2_A"/>
    <property type="match status" value="1"/>
</dbReference>
<dbReference type="InterPro" id="IPR041095">
    <property type="entry name" value="EFG_II"/>
</dbReference>
<dbReference type="InterPro" id="IPR035647">
    <property type="entry name" value="EFG_III/V"/>
</dbReference>
<dbReference type="InterPro" id="IPR000640">
    <property type="entry name" value="EFG_V-like"/>
</dbReference>
<dbReference type="InterPro" id="IPR004161">
    <property type="entry name" value="EFTu-like_2"/>
</dbReference>
<dbReference type="InterPro" id="IPR031157">
    <property type="entry name" value="G_TR_CS"/>
</dbReference>
<dbReference type="InterPro" id="IPR003586">
    <property type="entry name" value="Hint_dom_C"/>
</dbReference>
<dbReference type="InterPro" id="IPR003587">
    <property type="entry name" value="Hint_dom_N"/>
</dbReference>
<dbReference type="InterPro" id="IPR036844">
    <property type="entry name" value="Hint_dom_sf"/>
</dbReference>
<dbReference type="InterPro" id="IPR027434">
    <property type="entry name" value="Homing_endonucl"/>
</dbReference>
<dbReference type="InterPro" id="IPR006142">
    <property type="entry name" value="INTEIN"/>
</dbReference>
<dbReference type="InterPro" id="IPR030934">
    <property type="entry name" value="Intein_C"/>
</dbReference>
<dbReference type="InterPro" id="IPR004042">
    <property type="entry name" value="Intein_endonuc_central"/>
</dbReference>
<dbReference type="InterPro" id="IPR006141">
    <property type="entry name" value="Intein_N"/>
</dbReference>
<dbReference type="InterPro" id="IPR004860">
    <property type="entry name" value="LAGLIDADG_dom"/>
</dbReference>
<dbReference type="InterPro" id="IPR027417">
    <property type="entry name" value="P-loop_NTPase"/>
</dbReference>
<dbReference type="InterPro" id="IPR020568">
    <property type="entry name" value="Ribosomal_Su5_D2-typ_SF"/>
</dbReference>
<dbReference type="InterPro" id="IPR014721">
    <property type="entry name" value="Ribsml_uS5_D2-typ_fold_subgr"/>
</dbReference>
<dbReference type="InterPro" id="IPR005225">
    <property type="entry name" value="Small_GTP-bd"/>
</dbReference>
<dbReference type="InterPro" id="IPR000795">
    <property type="entry name" value="T_Tr_GTP-bd_dom"/>
</dbReference>
<dbReference type="InterPro" id="IPR009000">
    <property type="entry name" value="Transl_B-barrel_sf"/>
</dbReference>
<dbReference type="InterPro" id="IPR004543">
    <property type="entry name" value="Transl_elong_EFG/EF2_arc"/>
</dbReference>
<dbReference type="InterPro" id="IPR005517">
    <property type="entry name" value="Transl_elong_EFG/EF2_IV"/>
</dbReference>
<dbReference type="NCBIfam" id="TIGR00490">
    <property type="entry name" value="aEF-2"/>
    <property type="match status" value="1"/>
</dbReference>
<dbReference type="NCBIfam" id="TIGR01443">
    <property type="entry name" value="intein_Cterm"/>
    <property type="match status" value="1"/>
</dbReference>
<dbReference type="NCBIfam" id="TIGR01445">
    <property type="entry name" value="intein_Nterm"/>
    <property type="match status" value="1"/>
</dbReference>
<dbReference type="NCBIfam" id="TIGR00231">
    <property type="entry name" value="small_GTP"/>
    <property type="match status" value="1"/>
</dbReference>
<dbReference type="PANTHER" id="PTHR42908:SF3">
    <property type="entry name" value="ELONGATION FACTOR-LIKE GTPASE 1"/>
    <property type="match status" value="1"/>
</dbReference>
<dbReference type="PANTHER" id="PTHR42908">
    <property type="entry name" value="TRANSLATION ELONGATION FACTOR-RELATED"/>
    <property type="match status" value="1"/>
</dbReference>
<dbReference type="Pfam" id="PF00679">
    <property type="entry name" value="EFG_C"/>
    <property type="match status" value="1"/>
</dbReference>
<dbReference type="Pfam" id="PF14492">
    <property type="entry name" value="EFG_III"/>
    <property type="match status" value="1"/>
</dbReference>
<dbReference type="Pfam" id="PF03764">
    <property type="entry name" value="EFG_IV"/>
    <property type="match status" value="1"/>
</dbReference>
<dbReference type="Pfam" id="PF00009">
    <property type="entry name" value="GTP_EFTU"/>
    <property type="match status" value="1"/>
</dbReference>
<dbReference type="Pfam" id="PF03144">
    <property type="entry name" value="GTP_EFTU_D2"/>
    <property type="match status" value="1"/>
</dbReference>
<dbReference type="Pfam" id="PF14890">
    <property type="entry name" value="Intein_splicing"/>
    <property type="match status" value="1"/>
</dbReference>
<dbReference type="Pfam" id="PF14528">
    <property type="entry name" value="LAGLIDADG_3"/>
    <property type="match status" value="1"/>
</dbReference>
<dbReference type="PRINTS" id="PR00379">
    <property type="entry name" value="INTEIN"/>
</dbReference>
<dbReference type="SMART" id="SM00838">
    <property type="entry name" value="EFG_C"/>
    <property type="match status" value="1"/>
</dbReference>
<dbReference type="SMART" id="SM00889">
    <property type="entry name" value="EFG_IV"/>
    <property type="match status" value="1"/>
</dbReference>
<dbReference type="SMART" id="SM00305">
    <property type="entry name" value="HintC"/>
    <property type="match status" value="1"/>
</dbReference>
<dbReference type="SMART" id="SM00306">
    <property type="entry name" value="HintN"/>
    <property type="match status" value="1"/>
</dbReference>
<dbReference type="SUPFAM" id="SSF54980">
    <property type="entry name" value="EF-G C-terminal domain-like"/>
    <property type="match status" value="2"/>
</dbReference>
<dbReference type="SUPFAM" id="SSF51294">
    <property type="entry name" value="Hedgehog/intein (Hint) domain"/>
    <property type="match status" value="1"/>
</dbReference>
<dbReference type="SUPFAM" id="SSF55608">
    <property type="entry name" value="Homing endonucleases"/>
    <property type="match status" value="1"/>
</dbReference>
<dbReference type="SUPFAM" id="SSF52540">
    <property type="entry name" value="P-loop containing nucleoside triphosphate hydrolases"/>
    <property type="match status" value="1"/>
</dbReference>
<dbReference type="SUPFAM" id="SSF54211">
    <property type="entry name" value="Ribosomal protein S5 domain 2-like"/>
    <property type="match status" value="1"/>
</dbReference>
<dbReference type="SUPFAM" id="SSF50447">
    <property type="entry name" value="Translation proteins"/>
    <property type="match status" value="1"/>
</dbReference>
<dbReference type="PROSITE" id="PS00301">
    <property type="entry name" value="G_TR_1"/>
    <property type="match status" value="1"/>
</dbReference>
<dbReference type="PROSITE" id="PS51722">
    <property type="entry name" value="G_TR_2"/>
    <property type="match status" value="1"/>
</dbReference>
<dbReference type="PROSITE" id="PS50818">
    <property type="entry name" value="INTEIN_C_TER"/>
    <property type="match status" value="1"/>
</dbReference>
<dbReference type="PROSITE" id="PS50819">
    <property type="entry name" value="INTEIN_ENDONUCLEASE"/>
    <property type="match status" value="1"/>
</dbReference>
<dbReference type="PROSITE" id="PS50817">
    <property type="entry name" value="INTEIN_N_TER"/>
    <property type="match status" value="1"/>
</dbReference>
<organism>
    <name type="scientific">Methanopyrus kandleri (strain AV19 / DSM 6324 / JCM 9639 / NBRC 100938)</name>
    <dbReference type="NCBI Taxonomy" id="190192"/>
    <lineage>
        <taxon>Archaea</taxon>
        <taxon>Methanobacteriati</taxon>
        <taxon>Methanobacteriota</taxon>
        <taxon>Methanomada group</taxon>
        <taxon>Methanopyri</taxon>
        <taxon>Methanopyrales</taxon>
        <taxon>Methanopyraceae</taxon>
        <taxon>Methanopyrus</taxon>
    </lineage>
</organism>
<comment type="function">
    <text evidence="3">Catalyzes the GTP-dependent ribosomal translocation step during translation elongation. During this step, the ribosome changes from the pre-translocational (PRE) to the post-translocational (POST) state as the newly formed A-site-bound peptidyl-tRNA and P-site-bound deacylated tRNA move to the P and E sites, respectively. Catalyzes the coordinated movement of the two tRNA molecules, the mRNA and conformational changes in the ribosome.</text>
</comment>
<comment type="subcellular location">
    <subcellularLocation>
        <location evidence="3">Cytoplasm</location>
    </subcellularLocation>
</comment>
<comment type="PTM">
    <text evidence="1">This protein undergoes a protein self splicing that involves a post-translational excision of the intervening region (intein) followed by peptide ligation.</text>
</comment>
<comment type="miscellaneous">
    <text>The intein interrupts the GTP-binding site.</text>
</comment>
<comment type="similarity">
    <text evidence="3">Belongs to the TRAFAC class translation factor GTPase superfamily. Classic translation factor GTPase family. EF-G/EF-2 subfamily.</text>
</comment>
<reference key="1">
    <citation type="journal article" date="2002" name="Proc. Natl. Acad. Sci. U.S.A.">
        <title>The complete genome of hyperthermophile Methanopyrus kandleri AV19 and monophyly of archaeal methanogens.</title>
        <authorList>
            <person name="Slesarev A.I."/>
            <person name="Mezhevaya K.V."/>
            <person name="Makarova K.S."/>
            <person name="Polushin N.N."/>
            <person name="Shcherbinina O.V."/>
            <person name="Shakhova V.V."/>
            <person name="Belova G.I."/>
            <person name="Aravind L."/>
            <person name="Natale D.A."/>
            <person name="Rogozin I.B."/>
            <person name="Tatusov R.L."/>
            <person name="Wolf Y.I."/>
            <person name="Stetter K.O."/>
            <person name="Malykh A.G."/>
            <person name="Koonin E.V."/>
            <person name="Kozyavkin S.A."/>
        </authorList>
    </citation>
    <scope>NUCLEOTIDE SEQUENCE [LARGE SCALE GENOMIC DNA]</scope>
    <source>
        <strain>AV19 / DSM 6324 / JCM 9639 / NBRC 100938</strain>
    </source>
</reference>
<name>EF2_METKA</name>